<reference key="1">
    <citation type="submission" date="2005-10" db="EMBL/GenBank/DDBJ databases">
        <title>Complete sequence of chromosome 1 of Burkholderia sp. 383.</title>
        <authorList>
            <consortium name="US DOE Joint Genome Institute"/>
            <person name="Copeland A."/>
            <person name="Lucas S."/>
            <person name="Lapidus A."/>
            <person name="Barry K."/>
            <person name="Detter J.C."/>
            <person name="Glavina T."/>
            <person name="Hammon N."/>
            <person name="Israni S."/>
            <person name="Pitluck S."/>
            <person name="Chain P."/>
            <person name="Malfatti S."/>
            <person name="Shin M."/>
            <person name="Vergez L."/>
            <person name="Schmutz J."/>
            <person name="Larimer F."/>
            <person name="Land M."/>
            <person name="Kyrpides N."/>
            <person name="Lykidis A."/>
            <person name="Richardson P."/>
        </authorList>
    </citation>
    <scope>NUCLEOTIDE SEQUENCE [LARGE SCALE GENOMIC DNA]</scope>
    <source>
        <strain>ATCC 17760 / DSM 23089 / LMG 22485 / NCIMB 9086 / R18194 / 383</strain>
    </source>
</reference>
<organism>
    <name type="scientific">Burkholderia lata (strain ATCC 17760 / DSM 23089 / LMG 22485 / NCIMB 9086 / R18194 / 383)</name>
    <dbReference type="NCBI Taxonomy" id="482957"/>
    <lineage>
        <taxon>Bacteria</taxon>
        <taxon>Pseudomonadati</taxon>
        <taxon>Pseudomonadota</taxon>
        <taxon>Betaproteobacteria</taxon>
        <taxon>Burkholderiales</taxon>
        <taxon>Burkholderiaceae</taxon>
        <taxon>Burkholderia</taxon>
        <taxon>Burkholderia cepacia complex</taxon>
    </lineage>
</organism>
<sequence>MKTTFLDFEQPIAELEGKIEELRFVQDDSAVDISEEIERLSKKSQQLTKDLYANLSPWQVSQIARHPQRPYTLDYVAELFTDFHELHGDRAFADDVSIVGGLARFGGHPCMVIGHQKGRDTKERAARNFGMPRPEGYRKAERLMRLAEKFGLPIFTFVDTPGAYPGIGAEERGQSEAIGRNLYVMAELKTPIITTVIGEGGSGGALAIAVADTVMMLQFSTYSVISPEGCASILWKSAAKAPEAAEALGLTAHRLKALGLIDKIINEPLGGAHRDPKGMAALLRRALADSLRQFQGMSIDALRERRFERLMAYGKFKETTPGA</sequence>
<evidence type="ECO:0000255" key="1">
    <source>
        <dbReference type="HAMAP-Rule" id="MF_00823"/>
    </source>
</evidence>
<evidence type="ECO:0000255" key="2">
    <source>
        <dbReference type="PROSITE-ProRule" id="PRU01137"/>
    </source>
</evidence>
<dbReference type="EC" id="2.1.3.15" evidence="1"/>
<dbReference type="EMBL" id="CP000151">
    <property type="protein sequence ID" value="ABB08976.1"/>
    <property type="molecule type" value="Genomic_DNA"/>
</dbReference>
<dbReference type="RefSeq" id="WP_011352513.1">
    <property type="nucleotide sequence ID" value="NC_007510.1"/>
</dbReference>
<dbReference type="SMR" id="Q39EZ0"/>
<dbReference type="GeneID" id="45095264"/>
<dbReference type="KEGG" id="bur:Bcep18194_A5382"/>
<dbReference type="PATRIC" id="fig|482957.22.peg.2333"/>
<dbReference type="HOGENOM" id="CLU_015486_0_2_4"/>
<dbReference type="UniPathway" id="UPA00655">
    <property type="reaction ID" value="UER00711"/>
</dbReference>
<dbReference type="Proteomes" id="UP000002705">
    <property type="component" value="Chromosome 1"/>
</dbReference>
<dbReference type="GO" id="GO:0009317">
    <property type="term" value="C:acetyl-CoA carboxylase complex"/>
    <property type="evidence" value="ECO:0007669"/>
    <property type="project" value="InterPro"/>
</dbReference>
<dbReference type="GO" id="GO:0003989">
    <property type="term" value="F:acetyl-CoA carboxylase activity"/>
    <property type="evidence" value="ECO:0007669"/>
    <property type="project" value="InterPro"/>
</dbReference>
<dbReference type="GO" id="GO:0005524">
    <property type="term" value="F:ATP binding"/>
    <property type="evidence" value="ECO:0007669"/>
    <property type="project" value="UniProtKB-KW"/>
</dbReference>
<dbReference type="GO" id="GO:0016743">
    <property type="term" value="F:carboxyl- or carbamoyltransferase activity"/>
    <property type="evidence" value="ECO:0007669"/>
    <property type="project" value="UniProtKB-UniRule"/>
</dbReference>
<dbReference type="GO" id="GO:0006633">
    <property type="term" value="P:fatty acid biosynthetic process"/>
    <property type="evidence" value="ECO:0007669"/>
    <property type="project" value="UniProtKB-KW"/>
</dbReference>
<dbReference type="GO" id="GO:2001295">
    <property type="term" value="P:malonyl-CoA biosynthetic process"/>
    <property type="evidence" value="ECO:0007669"/>
    <property type="project" value="UniProtKB-UniRule"/>
</dbReference>
<dbReference type="Gene3D" id="3.90.226.10">
    <property type="entry name" value="2-enoyl-CoA Hydratase, Chain A, domain 1"/>
    <property type="match status" value="1"/>
</dbReference>
<dbReference type="HAMAP" id="MF_00823">
    <property type="entry name" value="AcetylCoA_CT_alpha"/>
    <property type="match status" value="1"/>
</dbReference>
<dbReference type="InterPro" id="IPR001095">
    <property type="entry name" value="Acetyl_CoA_COase_a_su"/>
</dbReference>
<dbReference type="InterPro" id="IPR029045">
    <property type="entry name" value="ClpP/crotonase-like_dom_sf"/>
</dbReference>
<dbReference type="InterPro" id="IPR011763">
    <property type="entry name" value="COA_CT_C"/>
</dbReference>
<dbReference type="NCBIfam" id="TIGR00513">
    <property type="entry name" value="accA"/>
    <property type="match status" value="1"/>
</dbReference>
<dbReference type="NCBIfam" id="NF041504">
    <property type="entry name" value="AccA_sub"/>
    <property type="match status" value="1"/>
</dbReference>
<dbReference type="NCBIfam" id="NF004344">
    <property type="entry name" value="PRK05724.1"/>
    <property type="match status" value="1"/>
</dbReference>
<dbReference type="PANTHER" id="PTHR42853">
    <property type="entry name" value="ACETYL-COENZYME A CARBOXYLASE CARBOXYL TRANSFERASE SUBUNIT ALPHA"/>
    <property type="match status" value="1"/>
</dbReference>
<dbReference type="PANTHER" id="PTHR42853:SF3">
    <property type="entry name" value="ACETYL-COENZYME A CARBOXYLASE CARBOXYL TRANSFERASE SUBUNIT ALPHA, CHLOROPLASTIC"/>
    <property type="match status" value="1"/>
</dbReference>
<dbReference type="Pfam" id="PF03255">
    <property type="entry name" value="ACCA"/>
    <property type="match status" value="1"/>
</dbReference>
<dbReference type="PRINTS" id="PR01069">
    <property type="entry name" value="ACCCTRFRASEA"/>
</dbReference>
<dbReference type="SUPFAM" id="SSF52096">
    <property type="entry name" value="ClpP/crotonase"/>
    <property type="match status" value="1"/>
</dbReference>
<dbReference type="PROSITE" id="PS50989">
    <property type="entry name" value="COA_CT_CTER"/>
    <property type="match status" value="1"/>
</dbReference>
<accession>Q39EZ0</accession>
<comment type="function">
    <text evidence="1">Component of the acetyl coenzyme A carboxylase (ACC) complex. First, biotin carboxylase catalyzes the carboxylation of biotin on its carrier protein (BCCP) and then the CO(2) group is transferred by the carboxyltransferase to acetyl-CoA to form malonyl-CoA.</text>
</comment>
<comment type="catalytic activity">
    <reaction evidence="1">
        <text>N(6)-carboxybiotinyl-L-lysyl-[protein] + acetyl-CoA = N(6)-biotinyl-L-lysyl-[protein] + malonyl-CoA</text>
        <dbReference type="Rhea" id="RHEA:54728"/>
        <dbReference type="Rhea" id="RHEA-COMP:10505"/>
        <dbReference type="Rhea" id="RHEA-COMP:10506"/>
        <dbReference type="ChEBI" id="CHEBI:57288"/>
        <dbReference type="ChEBI" id="CHEBI:57384"/>
        <dbReference type="ChEBI" id="CHEBI:83144"/>
        <dbReference type="ChEBI" id="CHEBI:83145"/>
        <dbReference type="EC" id="2.1.3.15"/>
    </reaction>
</comment>
<comment type="pathway">
    <text evidence="1">Lipid metabolism; malonyl-CoA biosynthesis; malonyl-CoA from acetyl-CoA: step 1/1.</text>
</comment>
<comment type="subunit">
    <text evidence="1">Acetyl-CoA carboxylase is a heterohexamer composed of biotin carboxyl carrier protein (AccB), biotin carboxylase (AccC) and two subunits each of ACCase subunit alpha (AccA) and ACCase subunit beta (AccD).</text>
</comment>
<comment type="subcellular location">
    <subcellularLocation>
        <location evidence="1">Cytoplasm</location>
    </subcellularLocation>
</comment>
<comment type="similarity">
    <text evidence="1">Belongs to the AccA family.</text>
</comment>
<proteinExistence type="inferred from homology"/>
<protein>
    <recommendedName>
        <fullName evidence="1">Acetyl-coenzyme A carboxylase carboxyl transferase subunit alpha</fullName>
        <shortName evidence="1">ACCase subunit alpha</shortName>
        <shortName evidence="1">Acetyl-CoA carboxylase carboxyltransferase subunit alpha</shortName>
        <ecNumber evidence="1">2.1.3.15</ecNumber>
    </recommendedName>
</protein>
<feature type="chain" id="PRO_1000062594" description="Acetyl-coenzyme A carboxylase carboxyl transferase subunit alpha">
    <location>
        <begin position="1"/>
        <end position="323"/>
    </location>
</feature>
<feature type="domain" description="CoA carboxyltransferase C-terminal" evidence="2">
    <location>
        <begin position="39"/>
        <end position="293"/>
    </location>
</feature>
<gene>
    <name evidence="1" type="primary">accA</name>
    <name type="ordered locus">Bcep18194_A5382</name>
</gene>
<keyword id="KW-0067">ATP-binding</keyword>
<keyword id="KW-0963">Cytoplasm</keyword>
<keyword id="KW-0275">Fatty acid biosynthesis</keyword>
<keyword id="KW-0276">Fatty acid metabolism</keyword>
<keyword id="KW-0444">Lipid biosynthesis</keyword>
<keyword id="KW-0443">Lipid metabolism</keyword>
<keyword id="KW-0547">Nucleotide-binding</keyword>
<keyword id="KW-0808">Transferase</keyword>
<name>ACCA_BURL3</name>